<name>RUVB_EDWI9</name>
<protein>
    <recommendedName>
        <fullName evidence="1">Holliday junction branch migration complex subunit RuvB</fullName>
        <ecNumber evidence="1">3.6.4.-</ecNumber>
    </recommendedName>
</protein>
<gene>
    <name evidence="1" type="primary">ruvB</name>
    <name type="ordered locus">NT01EI_1599</name>
</gene>
<sequence>MIEADRLIAADAQSEEEFLDRAIRPKTLADYVGQPQVRGQMEIFIKAAKLRGDALDHLLIFGPPGLGKTTLANIVANEMGVNLRTTSGPVLEKAGDLAAMLTNLEPHDVLFIDEIHRLSPVVEEVLYPAMEDYQLDIMIGEGPAARSIKIDLPPFTLVGATTRAGSLTSPLRDRFGIVQRLEFYQVADLQHIVGRSAHCLGLALTDEGALEVARRSRGTPRIANRLLRRVRDFAEVCADGRIDGEVAAQALNMLDVDAAGFDYMDRKLLLAVIDKFMGGPVGLDNLAAAIGEERETIEDVLEPYLIQQGFIQRTPRGRIATVHAYQHFGIDRAE</sequence>
<comment type="function">
    <text evidence="1">The RuvA-RuvB-RuvC complex processes Holliday junction (HJ) DNA during genetic recombination and DNA repair, while the RuvA-RuvB complex plays an important role in the rescue of blocked DNA replication forks via replication fork reversal (RFR). RuvA specifically binds to HJ cruciform DNA, conferring on it an open structure. The RuvB hexamer acts as an ATP-dependent pump, pulling dsDNA into and through the RuvAB complex. RuvB forms 2 homohexamers on either side of HJ DNA bound by 1 or 2 RuvA tetramers; 4 subunits per hexamer contact DNA at a time. Coordinated motions by a converter formed by DNA-disengaged RuvB subunits stimulates ATP hydrolysis and nucleotide exchange. Immobilization of the converter enables RuvB to convert the ATP-contained energy into a lever motion, pulling 2 nucleotides of DNA out of the RuvA tetramer per ATP hydrolyzed, thus driving DNA branch migration. The RuvB motors rotate together with the DNA substrate, which together with the progressing nucleotide cycle form the mechanistic basis for DNA recombination by continuous HJ branch migration. Branch migration allows RuvC to scan DNA until it finds its consensus sequence, where it cleaves and resolves cruciform DNA.</text>
</comment>
<comment type="catalytic activity">
    <reaction evidence="1">
        <text>ATP + H2O = ADP + phosphate + H(+)</text>
        <dbReference type="Rhea" id="RHEA:13065"/>
        <dbReference type="ChEBI" id="CHEBI:15377"/>
        <dbReference type="ChEBI" id="CHEBI:15378"/>
        <dbReference type="ChEBI" id="CHEBI:30616"/>
        <dbReference type="ChEBI" id="CHEBI:43474"/>
        <dbReference type="ChEBI" id="CHEBI:456216"/>
    </reaction>
</comment>
<comment type="subunit">
    <text evidence="1">Homohexamer. Forms an RuvA(8)-RuvB(12)-Holliday junction (HJ) complex. HJ DNA is sandwiched between 2 RuvA tetramers; dsDNA enters through RuvA and exits via RuvB. An RuvB hexamer assembles on each DNA strand where it exits the tetramer. Each RuvB hexamer is contacted by two RuvA subunits (via domain III) on 2 adjacent RuvB subunits; this complex drives branch migration. In the full resolvosome a probable DNA-RuvA(4)-RuvB(12)-RuvC(2) complex forms which resolves the HJ.</text>
</comment>
<comment type="subcellular location">
    <subcellularLocation>
        <location evidence="1">Cytoplasm</location>
    </subcellularLocation>
</comment>
<comment type="domain">
    <text evidence="1">Has 3 domains, the large (RuvB-L) and small ATPase (RuvB-S) domains and the C-terminal head (RuvB-H) domain. The head domain binds DNA, while the ATPase domains jointly bind ATP, ADP or are empty depending on the state of the subunit in the translocation cycle. During a single DNA translocation step the structure of each domain remains the same, but their relative positions change.</text>
</comment>
<comment type="similarity">
    <text evidence="1">Belongs to the RuvB family.</text>
</comment>
<keyword id="KW-0067">ATP-binding</keyword>
<keyword id="KW-0963">Cytoplasm</keyword>
<keyword id="KW-0227">DNA damage</keyword>
<keyword id="KW-0233">DNA recombination</keyword>
<keyword id="KW-0234">DNA repair</keyword>
<keyword id="KW-0238">DNA-binding</keyword>
<keyword id="KW-0378">Hydrolase</keyword>
<keyword id="KW-0547">Nucleotide-binding</keyword>
<feature type="chain" id="PRO_1000201834" description="Holliday junction branch migration complex subunit RuvB">
    <location>
        <begin position="1"/>
        <end position="334"/>
    </location>
</feature>
<feature type="region of interest" description="Large ATPase domain (RuvB-L)" evidence="1">
    <location>
        <begin position="4"/>
        <end position="184"/>
    </location>
</feature>
<feature type="region of interest" description="Small ATPAse domain (RuvB-S)" evidence="1">
    <location>
        <begin position="185"/>
        <end position="255"/>
    </location>
</feature>
<feature type="region of interest" description="Head domain (RuvB-H)" evidence="1">
    <location>
        <begin position="258"/>
        <end position="334"/>
    </location>
</feature>
<feature type="binding site" evidence="1">
    <location>
        <position position="23"/>
    </location>
    <ligand>
        <name>ATP</name>
        <dbReference type="ChEBI" id="CHEBI:30616"/>
    </ligand>
</feature>
<feature type="binding site" evidence="1">
    <location>
        <position position="24"/>
    </location>
    <ligand>
        <name>ATP</name>
        <dbReference type="ChEBI" id="CHEBI:30616"/>
    </ligand>
</feature>
<feature type="binding site" evidence="1">
    <location>
        <position position="65"/>
    </location>
    <ligand>
        <name>ATP</name>
        <dbReference type="ChEBI" id="CHEBI:30616"/>
    </ligand>
</feature>
<feature type="binding site" evidence="1">
    <location>
        <position position="68"/>
    </location>
    <ligand>
        <name>ATP</name>
        <dbReference type="ChEBI" id="CHEBI:30616"/>
    </ligand>
</feature>
<feature type="binding site" evidence="1">
    <location>
        <position position="69"/>
    </location>
    <ligand>
        <name>ATP</name>
        <dbReference type="ChEBI" id="CHEBI:30616"/>
    </ligand>
</feature>
<feature type="binding site" evidence="1">
    <location>
        <position position="69"/>
    </location>
    <ligand>
        <name>Mg(2+)</name>
        <dbReference type="ChEBI" id="CHEBI:18420"/>
    </ligand>
</feature>
<feature type="binding site" evidence="1">
    <location>
        <position position="70"/>
    </location>
    <ligand>
        <name>ATP</name>
        <dbReference type="ChEBI" id="CHEBI:30616"/>
    </ligand>
</feature>
<feature type="binding site" evidence="1">
    <location>
        <begin position="131"/>
        <end position="133"/>
    </location>
    <ligand>
        <name>ATP</name>
        <dbReference type="ChEBI" id="CHEBI:30616"/>
    </ligand>
</feature>
<feature type="binding site" evidence="1">
    <location>
        <position position="174"/>
    </location>
    <ligand>
        <name>ATP</name>
        <dbReference type="ChEBI" id="CHEBI:30616"/>
    </ligand>
</feature>
<feature type="binding site" evidence="1">
    <location>
        <position position="184"/>
    </location>
    <ligand>
        <name>ATP</name>
        <dbReference type="ChEBI" id="CHEBI:30616"/>
    </ligand>
</feature>
<feature type="binding site" evidence="1">
    <location>
        <position position="221"/>
    </location>
    <ligand>
        <name>ATP</name>
        <dbReference type="ChEBI" id="CHEBI:30616"/>
    </ligand>
</feature>
<feature type="binding site" evidence="1">
    <location>
        <position position="294"/>
    </location>
    <ligand>
        <name>DNA</name>
        <dbReference type="ChEBI" id="CHEBI:16991"/>
    </ligand>
</feature>
<feature type="binding site" evidence="1">
    <location>
        <position position="313"/>
    </location>
    <ligand>
        <name>DNA</name>
        <dbReference type="ChEBI" id="CHEBI:16991"/>
    </ligand>
</feature>
<feature type="binding site" evidence="1">
    <location>
        <position position="318"/>
    </location>
    <ligand>
        <name>DNA</name>
        <dbReference type="ChEBI" id="CHEBI:16991"/>
    </ligand>
</feature>
<evidence type="ECO:0000255" key="1">
    <source>
        <dbReference type="HAMAP-Rule" id="MF_00016"/>
    </source>
</evidence>
<dbReference type="EC" id="3.6.4.-" evidence="1"/>
<dbReference type="EMBL" id="CP001600">
    <property type="protein sequence ID" value="ACR68783.1"/>
    <property type="molecule type" value="Genomic_DNA"/>
</dbReference>
<dbReference type="RefSeq" id="WP_015870940.1">
    <property type="nucleotide sequence ID" value="NZ_CP169062.1"/>
</dbReference>
<dbReference type="SMR" id="C5B9T2"/>
<dbReference type="STRING" id="67780.B6E78_01190"/>
<dbReference type="GeneID" id="69538576"/>
<dbReference type="KEGG" id="eic:NT01EI_1599"/>
<dbReference type="PATRIC" id="fig|634503.3.peg.1431"/>
<dbReference type="HOGENOM" id="CLU_055599_1_0_6"/>
<dbReference type="OrthoDB" id="9804478at2"/>
<dbReference type="Proteomes" id="UP000001485">
    <property type="component" value="Chromosome"/>
</dbReference>
<dbReference type="GO" id="GO:0005737">
    <property type="term" value="C:cytoplasm"/>
    <property type="evidence" value="ECO:0007669"/>
    <property type="project" value="UniProtKB-SubCell"/>
</dbReference>
<dbReference type="GO" id="GO:0048476">
    <property type="term" value="C:Holliday junction resolvase complex"/>
    <property type="evidence" value="ECO:0007669"/>
    <property type="project" value="UniProtKB-UniRule"/>
</dbReference>
<dbReference type="GO" id="GO:0005524">
    <property type="term" value="F:ATP binding"/>
    <property type="evidence" value="ECO:0007669"/>
    <property type="project" value="UniProtKB-UniRule"/>
</dbReference>
<dbReference type="GO" id="GO:0016887">
    <property type="term" value="F:ATP hydrolysis activity"/>
    <property type="evidence" value="ECO:0007669"/>
    <property type="project" value="InterPro"/>
</dbReference>
<dbReference type="GO" id="GO:0000400">
    <property type="term" value="F:four-way junction DNA binding"/>
    <property type="evidence" value="ECO:0007669"/>
    <property type="project" value="UniProtKB-UniRule"/>
</dbReference>
<dbReference type="GO" id="GO:0009378">
    <property type="term" value="F:four-way junction helicase activity"/>
    <property type="evidence" value="ECO:0007669"/>
    <property type="project" value="InterPro"/>
</dbReference>
<dbReference type="GO" id="GO:0006310">
    <property type="term" value="P:DNA recombination"/>
    <property type="evidence" value="ECO:0007669"/>
    <property type="project" value="UniProtKB-UniRule"/>
</dbReference>
<dbReference type="GO" id="GO:0006281">
    <property type="term" value="P:DNA repair"/>
    <property type="evidence" value="ECO:0007669"/>
    <property type="project" value="UniProtKB-UniRule"/>
</dbReference>
<dbReference type="CDD" id="cd00009">
    <property type="entry name" value="AAA"/>
    <property type="match status" value="1"/>
</dbReference>
<dbReference type="FunFam" id="1.10.10.10:FF:000086">
    <property type="entry name" value="Holliday junction ATP-dependent DNA helicase RuvB"/>
    <property type="match status" value="1"/>
</dbReference>
<dbReference type="FunFam" id="1.10.8.60:FF:000023">
    <property type="entry name" value="Holliday junction ATP-dependent DNA helicase RuvB"/>
    <property type="match status" value="1"/>
</dbReference>
<dbReference type="FunFam" id="3.40.50.300:FF:000073">
    <property type="entry name" value="Holliday junction ATP-dependent DNA helicase RuvB"/>
    <property type="match status" value="1"/>
</dbReference>
<dbReference type="Gene3D" id="1.10.8.60">
    <property type="match status" value="1"/>
</dbReference>
<dbReference type="Gene3D" id="3.40.50.300">
    <property type="entry name" value="P-loop containing nucleotide triphosphate hydrolases"/>
    <property type="match status" value="1"/>
</dbReference>
<dbReference type="Gene3D" id="1.10.10.10">
    <property type="entry name" value="Winged helix-like DNA-binding domain superfamily/Winged helix DNA-binding domain"/>
    <property type="match status" value="1"/>
</dbReference>
<dbReference type="HAMAP" id="MF_00016">
    <property type="entry name" value="DNA_HJ_migration_RuvB"/>
    <property type="match status" value="1"/>
</dbReference>
<dbReference type="InterPro" id="IPR003593">
    <property type="entry name" value="AAA+_ATPase"/>
</dbReference>
<dbReference type="InterPro" id="IPR041445">
    <property type="entry name" value="AAA_lid_4"/>
</dbReference>
<dbReference type="InterPro" id="IPR004605">
    <property type="entry name" value="DNA_helicase_Holl-junc_RuvB"/>
</dbReference>
<dbReference type="InterPro" id="IPR027417">
    <property type="entry name" value="P-loop_NTPase"/>
</dbReference>
<dbReference type="InterPro" id="IPR008824">
    <property type="entry name" value="RuvB-like_N"/>
</dbReference>
<dbReference type="InterPro" id="IPR008823">
    <property type="entry name" value="RuvB_C"/>
</dbReference>
<dbReference type="InterPro" id="IPR036388">
    <property type="entry name" value="WH-like_DNA-bd_sf"/>
</dbReference>
<dbReference type="InterPro" id="IPR036390">
    <property type="entry name" value="WH_DNA-bd_sf"/>
</dbReference>
<dbReference type="NCBIfam" id="NF000868">
    <property type="entry name" value="PRK00080.1"/>
    <property type="match status" value="1"/>
</dbReference>
<dbReference type="NCBIfam" id="TIGR00635">
    <property type="entry name" value="ruvB"/>
    <property type="match status" value="1"/>
</dbReference>
<dbReference type="PANTHER" id="PTHR42848">
    <property type="match status" value="1"/>
</dbReference>
<dbReference type="PANTHER" id="PTHR42848:SF1">
    <property type="entry name" value="HOLLIDAY JUNCTION BRANCH MIGRATION COMPLEX SUBUNIT RUVB"/>
    <property type="match status" value="1"/>
</dbReference>
<dbReference type="Pfam" id="PF17864">
    <property type="entry name" value="AAA_lid_4"/>
    <property type="match status" value="1"/>
</dbReference>
<dbReference type="Pfam" id="PF05491">
    <property type="entry name" value="RuvB_C"/>
    <property type="match status" value="1"/>
</dbReference>
<dbReference type="Pfam" id="PF05496">
    <property type="entry name" value="RuvB_N"/>
    <property type="match status" value="1"/>
</dbReference>
<dbReference type="SMART" id="SM00382">
    <property type="entry name" value="AAA"/>
    <property type="match status" value="1"/>
</dbReference>
<dbReference type="SUPFAM" id="SSF52540">
    <property type="entry name" value="P-loop containing nucleoside triphosphate hydrolases"/>
    <property type="match status" value="1"/>
</dbReference>
<dbReference type="SUPFAM" id="SSF46785">
    <property type="entry name" value="Winged helix' DNA-binding domain"/>
    <property type="match status" value="1"/>
</dbReference>
<reference key="1">
    <citation type="submission" date="2009-03" db="EMBL/GenBank/DDBJ databases">
        <title>Complete genome sequence of Edwardsiella ictaluri 93-146.</title>
        <authorList>
            <person name="Williams M.L."/>
            <person name="Gillaspy A.F."/>
            <person name="Dyer D.W."/>
            <person name="Thune R.L."/>
            <person name="Waldbieser G.C."/>
            <person name="Schuster S.C."/>
            <person name="Gipson J."/>
            <person name="Zaitshik J."/>
            <person name="Landry C."/>
            <person name="Lawrence M.L."/>
        </authorList>
    </citation>
    <scope>NUCLEOTIDE SEQUENCE [LARGE SCALE GENOMIC DNA]</scope>
    <source>
        <strain>93-146</strain>
    </source>
</reference>
<proteinExistence type="inferred from homology"/>
<organism>
    <name type="scientific">Edwardsiella ictaluri (strain 93-146)</name>
    <dbReference type="NCBI Taxonomy" id="634503"/>
    <lineage>
        <taxon>Bacteria</taxon>
        <taxon>Pseudomonadati</taxon>
        <taxon>Pseudomonadota</taxon>
        <taxon>Gammaproteobacteria</taxon>
        <taxon>Enterobacterales</taxon>
        <taxon>Hafniaceae</taxon>
        <taxon>Edwardsiella</taxon>
    </lineage>
</organism>
<accession>C5B9T2</accession>